<keyword id="KW-0325">Glycoprotein</keyword>
<keyword id="KW-0472">Membrane</keyword>
<keyword id="KW-1185">Reference proteome</keyword>
<keyword id="KW-0769">Symport</keyword>
<keyword id="KW-0812">Transmembrane</keyword>
<keyword id="KW-1133">Transmembrane helix</keyword>
<keyword id="KW-0813">Transport</keyword>
<gene>
    <name type="primary">glt-6</name>
    <name type="ORF">R05G6.6</name>
</gene>
<organism>
    <name type="scientific">Caenorhabditis elegans</name>
    <dbReference type="NCBI Taxonomy" id="6239"/>
    <lineage>
        <taxon>Eukaryota</taxon>
        <taxon>Metazoa</taxon>
        <taxon>Ecdysozoa</taxon>
        <taxon>Nematoda</taxon>
        <taxon>Chromadorea</taxon>
        <taxon>Rhabditida</taxon>
        <taxon>Rhabditina</taxon>
        <taxon>Rhabditomorpha</taxon>
        <taxon>Rhabditoidea</taxon>
        <taxon>Rhabditidae</taxon>
        <taxon>Peloderinae</taxon>
        <taxon>Caenorhabditis</taxon>
    </lineage>
</organism>
<dbReference type="EMBL" id="FO081426">
    <property type="protein sequence ID" value="CCD71562.1"/>
    <property type="molecule type" value="Genomic_DNA"/>
</dbReference>
<dbReference type="PIR" id="T29354">
    <property type="entry name" value="T29354"/>
</dbReference>
<dbReference type="RefSeq" id="NP_501210.3">
    <property type="nucleotide sequence ID" value="NM_068809.7"/>
</dbReference>
<dbReference type="SMR" id="Q21751"/>
<dbReference type="FunCoup" id="Q21751">
    <property type="interactions" value="147"/>
</dbReference>
<dbReference type="STRING" id="6239.R05G6.6.1"/>
<dbReference type="GlyCosmos" id="Q21751">
    <property type="glycosylation" value="1 site, No reported glycans"/>
</dbReference>
<dbReference type="PaxDb" id="6239-R05G6.6"/>
<dbReference type="EnsemblMetazoa" id="R05G6.6.1">
    <property type="protein sequence ID" value="R05G6.6.1"/>
    <property type="gene ID" value="WBGene00001624"/>
</dbReference>
<dbReference type="GeneID" id="187623"/>
<dbReference type="KEGG" id="cel:CELE_R05G6.6"/>
<dbReference type="UCSC" id="R05G6.6">
    <property type="organism name" value="c. elegans"/>
</dbReference>
<dbReference type="AGR" id="WB:WBGene00001624"/>
<dbReference type="CTD" id="187623"/>
<dbReference type="WormBase" id="R05G6.6">
    <property type="protein sequence ID" value="CE41538"/>
    <property type="gene ID" value="WBGene00001624"/>
    <property type="gene designation" value="glt-6"/>
</dbReference>
<dbReference type="eggNOG" id="KOG3787">
    <property type="taxonomic scope" value="Eukaryota"/>
</dbReference>
<dbReference type="HOGENOM" id="CLU_019375_3_0_1"/>
<dbReference type="InParanoid" id="Q21751"/>
<dbReference type="OMA" id="YVFTVCA"/>
<dbReference type="OrthoDB" id="5877963at2759"/>
<dbReference type="PhylomeDB" id="Q21751"/>
<dbReference type="Reactome" id="R-CEL-210455">
    <property type="pathway name" value="Astrocytic Glutamate-Glutamine Uptake And Metabolism"/>
</dbReference>
<dbReference type="Reactome" id="R-CEL-210500">
    <property type="pathway name" value="Glutamate Neurotransmitter Release Cycle"/>
</dbReference>
<dbReference type="Reactome" id="R-CEL-352230">
    <property type="pathway name" value="Amino acid transport across the plasma membrane"/>
</dbReference>
<dbReference type="Reactome" id="R-CEL-425393">
    <property type="pathway name" value="Transport of inorganic cations/anions and amino acids/oligopeptides"/>
</dbReference>
<dbReference type="Reactome" id="R-CEL-9013149">
    <property type="pathway name" value="RAC1 GTPase cycle"/>
</dbReference>
<dbReference type="Reactome" id="R-CEL-9013406">
    <property type="pathway name" value="RHOQ GTPase cycle"/>
</dbReference>
<dbReference type="Reactome" id="R-CEL-9013407">
    <property type="pathway name" value="RHOH GTPase cycle"/>
</dbReference>
<dbReference type="Reactome" id="R-CEL-9013423">
    <property type="pathway name" value="RAC3 GTPase cycle"/>
</dbReference>
<dbReference type="PRO" id="PR:Q21751"/>
<dbReference type="Proteomes" id="UP000001940">
    <property type="component" value="Chromosome IV"/>
</dbReference>
<dbReference type="Bgee" id="WBGene00001624">
    <property type="expression patterns" value="Expressed in larva and 3 other cell types or tissues"/>
</dbReference>
<dbReference type="GO" id="GO:0005886">
    <property type="term" value="C:plasma membrane"/>
    <property type="evidence" value="ECO:0000318"/>
    <property type="project" value="GO_Central"/>
</dbReference>
<dbReference type="GO" id="GO:0015501">
    <property type="term" value="F:glutamate:sodium symporter activity"/>
    <property type="evidence" value="ECO:0000318"/>
    <property type="project" value="GO_Central"/>
</dbReference>
<dbReference type="GO" id="GO:0005313">
    <property type="term" value="F:L-glutamate transmembrane transporter activity"/>
    <property type="evidence" value="ECO:0000318"/>
    <property type="project" value="GO_Central"/>
</dbReference>
<dbReference type="GO" id="GO:0015175">
    <property type="term" value="F:neutral L-amino acid transmembrane transporter activity"/>
    <property type="evidence" value="ECO:0000318"/>
    <property type="project" value="GO_Central"/>
</dbReference>
<dbReference type="GO" id="GO:0015813">
    <property type="term" value="P:L-glutamate transmembrane transport"/>
    <property type="evidence" value="ECO:0000318"/>
    <property type="project" value="GO_Central"/>
</dbReference>
<dbReference type="Gene3D" id="1.10.3860.10">
    <property type="entry name" value="Sodium:dicarboxylate symporter"/>
    <property type="match status" value="1"/>
</dbReference>
<dbReference type="InterPro" id="IPR050746">
    <property type="entry name" value="DAACS"/>
</dbReference>
<dbReference type="InterPro" id="IPR001991">
    <property type="entry name" value="Na-dicarboxylate_symporter"/>
</dbReference>
<dbReference type="InterPro" id="IPR018107">
    <property type="entry name" value="Na-dicarboxylate_symporter_CS"/>
</dbReference>
<dbReference type="InterPro" id="IPR036458">
    <property type="entry name" value="Na:dicarbo_symporter_sf"/>
</dbReference>
<dbReference type="PANTHER" id="PTHR11958:SF99">
    <property type="entry name" value="SODIUM-DEPENDENT EXCITATORY AMINO ACID TRANSPORTER GLT-6-RELATED"/>
    <property type="match status" value="1"/>
</dbReference>
<dbReference type="PANTHER" id="PTHR11958">
    <property type="entry name" value="SODIUM/DICARBOXYLATE SYMPORTER-RELATED"/>
    <property type="match status" value="1"/>
</dbReference>
<dbReference type="Pfam" id="PF00375">
    <property type="entry name" value="SDF"/>
    <property type="match status" value="1"/>
</dbReference>
<dbReference type="PRINTS" id="PR00173">
    <property type="entry name" value="EDTRNSPORT"/>
</dbReference>
<dbReference type="SUPFAM" id="SSF118215">
    <property type="entry name" value="Proton glutamate symport protein"/>
    <property type="match status" value="1"/>
</dbReference>
<dbReference type="PROSITE" id="PS00713">
    <property type="entry name" value="NA_DICARBOXYL_SYMP_1"/>
    <property type="match status" value="1"/>
</dbReference>
<dbReference type="PROSITE" id="PS00714">
    <property type="entry name" value="NA_DICARBOXYL_SYMP_2"/>
    <property type="match status" value="1"/>
</dbReference>
<evidence type="ECO:0000250" key="1"/>
<evidence type="ECO:0000255" key="2"/>
<evidence type="ECO:0000256" key="3">
    <source>
        <dbReference type="SAM" id="MobiDB-lite"/>
    </source>
</evidence>
<evidence type="ECO:0000305" key="4"/>
<reference key="1">
    <citation type="journal article" date="1998" name="Science">
        <title>Genome sequence of the nematode C. elegans: a platform for investigating biology.</title>
        <authorList>
            <consortium name="The C. elegans sequencing consortium"/>
        </authorList>
    </citation>
    <scope>NUCLEOTIDE SEQUENCE [LARGE SCALE GENOMIC DNA]</scope>
    <source>
        <strain>Bristol N2</strain>
    </source>
</reference>
<accession>Q21751</accession>
<name>EAA6_CAEEL</name>
<protein>
    <recommendedName>
        <fullName>Putative sodium-dependent excitatory amino acid transporter glt-6</fullName>
    </recommendedName>
</protein>
<proteinExistence type="inferred from homology"/>
<feature type="chain" id="PRO_0000202077" description="Putative sodium-dependent excitatory amino acid transporter glt-6">
    <location>
        <begin position="1"/>
        <end position="542"/>
    </location>
</feature>
<feature type="topological domain" description="Cytoplasmic" evidence="2">
    <location>
        <begin position="1"/>
        <end position="15"/>
    </location>
</feature>
<feature type="transmembrane region" description="Helical" evidence="2">
    <location>
        <begin position="16"/>
        <end position="36"/>
    </location>
</feature>
<feature type="transmembrane region" description="Helical" evidence="2">
    <location>
        <begin position="55"/>
        <end position="75"/>
    </location>
</feature>
<feature type="transmembrane region" description="Helical" evidence="2">
    <location>
        <begin position="93"/>
        <end position="113"/>
    </location>
</feature>
<feature type="topological domain" description="Extracellular" evidence="2">
    <location>
        <begin position="114"/>
        <end position="191"/>
    </location>
</feature>
<feature type="transmembrane region" description="Helical" evidence="2">
    <location>
        <begin position="192"/>
        <end position="212"/>
    </location>
</feature>
<feature type="transmembrane region" description="Helical" evidence="2">
    <location>
        <begin position="234"/>
        <end position="254"/>
    </location>
</feature>
<feature type="transmembrane region" description="Helical" evidence="2">
    <location>
        <begin position="265"/>
        <end position="285"/>
    </location>
</feature>
<feature type="transmembrane region" description="Helical" evidence="2">
    <location>
        <begin position="303"/>
        <end position="323"/>
    </location>
</feature>
<feature type="transmembrane region" description="Helical" evidence="2">
    <location>
        <begin position="386"/>
        <end position="406"/>
    </location>
</feature>
<feature type="region of interest" description="Disordered" evidence="3">
    <location>
        <begin position="505"/>
        <end position="542"/>
    </location>
</feature>
<feature type="compositionally biased region" description="Low complexity" evidence="3">
    <location>
        <begin position="505"/>
        <end position="517"/>
    </location>
</feature>
<feature type="compositionally biased region" description="Polar residues" evidence="3">
    <location>
        <begin position="518"/>
        <end position="529"/>
    </location>
</feature>
<feature type="glycosylation site" description="N-linked (GlcNAc...) asparagine" evidence="2">
    <location>
        <position position="175"/>
    </location>
</feature>
<comment type="subcellular location">
    <subcellularLocation>
        <location evidence="1">Membrane</location>
        <topology evidence="1">Multi-pass membrane protein</topology>
    </subcellularLocation>
</comment>
<comment type="similarity">
    <text evidence="4">Belongs to the dicarboxylate/amino acid:cation symporter (DAACS) (TC 2.A.23) family.</text>
</comment>
<sequence length="542" mass="59156">MKSKRRDDIVQFCRENTLLVMTMFSVFLGVVLGFGLRPLNLSQETLQLINFPGEIFMQVLKMMILPLIFSSLISALAQMDAKESGQMGASTVLYYLSTAVLATILGIFLVTVIHPGDPSIKGTDISEAPSDGNVSPLDTFLDLVRNMFPENIIQATFERMQTTYVAIRPKIASKNGTSGNIIVKRSIGMTKGMNILGIIVFCTGFGIVISQLGERARIVVDFFVILDAVIMRWVVTLMWFAPLGITCLICGNLLELDDISDIASVLALYVFTVCAGLILHTIITVPLMYFFITRENPLPIFKGMIQAAVTAFGTASGGATLPMSMQCLEDHCGVDRRISRFVLPLGSTINMDGNALYEAVAVIFIAQLNNVQLSLAEVLTVSITATIASIGLGSVPAGLVSILLILNTVGLPVRDVSMLFTVDWLLDRVRTAVNVLGDAFAASMVQHLLQKKLDQADARHDYKTELKGEIELLKSAATSRRPSFTMSEASKELFLTHANTAGNSRIGSRIGSRRPSSTNLHLSWRNNNIEPPYTPLPNDENV</sequence>